<name>YFH7_EREGS</name>
<keyword id="KW-0067">ATP-binding</keyword>
<keyword id="KW-0418">Kinase</keyword>
<keyword id="KW-0547">Nucleotide-binding</keyword>
<keyword id="KW-1185">Reference proteome</keyword>
<keyword id="KW-0808">Transferase</keyword>
<dbReference type="EC" id="2.7.1.-"/>
<dbReference type="EMBL" id="AE016820">
    <property type="protein sequence ID" value="AAS54435.1"/>
    <property type="molecule type" value="Genomic_DNA"/>
</dbReference>
<dbReference type="RefSeq" id="NP_986611.1">
    <property type="nucleotide sequence ID" value="NM_211673.1"/>
</dbReference>
<dbReference type="SMR" id="Q750K6"/>
<dbReference type="FunCoup" id="Q750K6">
    <property type="interactions" value="16"/>
</dbReference>
<dbReference type="STRING" id="284811.Q750K6"/>
<dbReference type="EnsemblFungi" id="AAS54435">
    <property type="protein sequence ID" value="AAS54435"/>
    <property type="gene ID" value="AGOS_AGL055C"/>
</dbReference>
<dbReference type="GeneID" id="4622910"/>
<dbReference type="KEGG" id="ago:AGOS_AGL055C"/>
<dbReference type="eggNOG" id="KOG2702">
    <property type="taxonomic scope" value="Eukaryota"/>
</dbReference>
<dbReference type="HOGENOM" id="CLU_067202_1_0_1"/>
<dbReference type="InParanoid" id="Q750K6"/>
<dbReference type="OMA" id="LYDQENW"/>
<dbReference type="OrthoDB" id="6362633at2759"/>
<dbReference type="Proteomes" id="UP000000591">
    <property type="component" value="Chromosome VII"/>
</dbReference>
<dbReference type="GO" id="GO:0005737">
    <property type="term" value="C:cytoplasm"/>
    <property type="evidence" value="ECO:0000318"/>
    <property type="project" value="GO_Central"/>
</dbReference>
<dbReference type="GO" id="GO:0005524">
    <property type="term" value="F:ATP binding"/>
    <property type="evidence" value="ECO:0007669"/>
    <property type="project" value="UniProtKB-KW"/>
</dbReference>
<dbReference type="GO" id="GO:0016887">
    <property type="term" value="F:ATP hydrolysis activity"/>
    <property type="evidence" value="ECO:0007669"/>
    <property type="project" value="EnsemblFungi"/>
</dbReference>
<dbReference type="GO" id="GO:0016301">
    <property type="term" value="F:kinase activity"/>
    <property type="evidence" value="ECO:0007669"/>
    <property type="project" value="UniProtKB-KW"/>
</dbReference>
<dbReference type="Gene3D" id="3.40.50.300">
    <property type="entry name" value="P-loop containing nucleotide triphosphate hydrolases"/>
    <property type="match status" value="1"/>
</dbReference>
<dbReference type="InterPro" id="IPR027417">
    <property type="entry name" value="P-loop_NTPase"/>
</dbReference>
<dbReference type="PANTHER" id="PTHR10285">
    <property type="entry name" value="URIDINE KINASE"/>
    <property type="match status" value="1"/>
</dbReference>
<dbReference type="SUPFAM" id="SSF52540">
    <property type="entry name" value="P-loop containing nucleoside triphosphate hydrolases"/>
    <property type="match status" value="1"/>
</dbReference>
<organism>
    <name type="scientific">Eremothecium gossypii (strain ATCC 10895 / CBS 109.51 / FGSC 9923 / NRRL Y-1056)</name>
    <name type="common">Yeast</name>
    <name type="synonym">Ashbya gossypii</name>
    <dbReference type="NCBI Taxonomy" id="284811"/>
    <lineage>
        <taxon>Eukaryota</taxon>
        <taxon>Fungi</taxon>
        <taxon>Dikarya</taxon>
        <taxon>Ascomycota</taxon>
        <taxon>Saccharomycotina</taxon>
        <taxon>Saccharomycetes</taxon>
        <taxon>Saccharomycetales</taxon>
        <taxon>Saccharomycetaceae</taxon>
        <taxon>Eremothecium</taxon>
    </lineage>
</organism>
<comment type="function">
    <text evidence="1">ATP-dependent kinase that could be involved in endoplasmic reticulum membrane assembly.</text>
</comment>
<comment type="similarity">
    <text evidence="2">Belongs to the YFH7 family.</text>
</comment>
<accession>Q750K6</accession>
<reference key="1">
    <citation type="journal article" date="2004" name="Science">
        <title>The Ashbya gossypii genome as a tool for mapping the ancient Saccharomyces cerevisiae genome.</title>
        <authorList>
            <person name="Dietrich F.S."/>
            <person name="Voegeli S."/>
            <person name="Brachat S."/>
            <person name="Lerch A."/>
            <person name="Gates K."/>
            <person name="Steiner S."/>
            <person name="Mohr C."/>
            <person name="Poehlmann R."/>
            <person name="Luedi P."/>
            <person name="Choi S."/>
            <person name="Wing R.A."/>
            <person name="Flavier A."/>
            <person name="Gaffney T.D."/>
            <person name="Philippsen P."/>
        </authorList>
    </citation>
    <scope>NUCLEOTIDE SEQUENCE [LARGE SCALE GENOMIC DNA]</scope>
    <source>
        <strain>ATCC 10895 / CBS 109.51 / FGSC 9923 / NRRL Y-1056</strain>
    </source>
</reference>
<reference key="2">
    <citation type="journal article" date="2013" name="G3 (Bethesda)">
        <title>Genomes of Ashbya fungi isolated from insects reveal four mating-type loci, numerous translocations, lack of transposons, and distinct gene duplications.</title>
        <authorList>
            <person name="Dietrich F.S."/>
            <person name="Voegeli S."/>
            <person name="Kuo S."/>
            <person name="Philippsen P."/>
        </authorList>
    </citation>
    <scope>GENOME REANNOTATION</scope>
    <source>
        <strain>ATCC 10895 / CBS 109.51 / FGSC 9923 / NRRL Y-1056</strain>
    </source>
</reference>
<protein>
    <recommendedName>
        <fullName>ATP-dependent kinase YFH7</fullName>
        <ecNumber>2.7.1.-</ecNumber>
    </recommendedName>
</protein>
<gene>
    <name type="primary">YFH7</name>
    <name type="ordered locus">AGL055C</name>
</gene>
<evidence type="ECO:0000250" key="1"/>
<evidence type="ECO:0000305" key="2"/>
<sequence length="334" mass="36758">MDYEDLKKRVWDLLAQNIESNYRVAVVVVGHPGSGKSTMAQRLKRDLNQEFQSHLKARRGGLRISAGIAAESLDETVPVASGALVEEARRGFFAHVEDPGFKPHKFYDGDGTAVIFGRGGLPNSVRIASEALDPASSVNIAEVVPMDGFHLSRAHLDHFADAAAAHKRRGAPWTFDSNNYLQLCKLLAATCKWKPAKRPKGETLMETICDTFAQCPVISYPGFDHAAKDPVRDQHVLTGFTRVLIFDGLYLLYDQENWAHIYHSLASTGAVLVVNVTASEETRETRVATRHFAAGLVGSIEEGVRKFRENDLLNAKLIEEHTLGGVPTLILSND</sequence>
<feature type="chain" id="PRO_0000404212" description="ATP-dependent kinase YFH7">
    <location>
        <begin position="1"/>
        <end position="334"/>
    </location>
</feature>
<feature type="binding site" evidence="1">
    <location>
        <begin position="30"/>
        <end position="38"/>
    </location>
    <ligand>
        <name>ATP</name>
        <dbReference type="ChEBI" id="CHEBI:30616"/>
    </ligand>
</feature>
<proteinExistence type="inferred from homology"/>